<organism>
    <name type="scientific">AKV murine leukemia virus</name>
    <name type="common">AKR (endogenous) murine leukemia virus</name>
    <dbReference type="NCBI Taxonomy" id="11791"/>
    <lineage>
        <taxon>Viruses</taxon>
        <taxon>Riboviria</taxon>
        <taxon>Pararnavirae</taxon>
        <taxon>Artverviricota</taxon>
        <taxon>Revtraviricetes</taxon>
        <taxon>Ortervirales</taxon>
        <taxon>Retroviridae</taxon>
        <taxon>Orthoretrovirinae</taxon>
        <taxon>Gammaretrovirus</taxon>
        <taxon>Murine leukemia virus</taxon>
    </lineage>
</organism>
<organismHost>
    <name type="scientific">Mus musculus</name>
    <name type="common">Mouse</name>
    <dbReference type="NCBI Taxonomy" id="10090"/>
</organismHost>
<protein>
    <recommendedName>
        <fullName>Gag-Pol polyprotein</fullName>
    </recommendedName>
    <component>
        <recommendedName>
            <fullName>Matrix protein p15</fullName>
            <shortName>MA</shortName>
        </recommendedName>
    </component>
    <component>
        <recommendedName>
            <fullName>RNA-binding phosphoprotein p12</fullName>
        </recommendedName>
        <alternativeName>
            <fullName>pp12</fullName>
        </alternativeName>
    </component>
    <component>
        <recommendedName>
            <fullName>Capsid protein p30</fullName>
            <shortName>CA</shortName>
        </recommendedName>
    </component>
    <component>
        <recommendedName>
            <fullName>Nucleocapsid protein p10-Pol</fullName>
            <shortName>NC-pol</shortName>
        </recommendedName>
    </component>
    <component>
        <recommendedName>
            <fullName>Protease</fullName>
            <ecNumber evidence="7">3.4.23.-</ecNumber>
        </recommendedName>
    </component>
    <component>
        <recommendedName>
            <fullName>Reverse transcriptase/ribonuclease H</fullName>
            <shortName>RT</shortName>
            <ecNumber evidence="8">2.7.7.49</ecNumber>
            <ecNumber evidence="8">2.7.7.7</ecNumber>
            <ecNumber evidence="9">3.1.26.4</ecNumber>
        </recommendedName>
    </component>
    <component>
        <recommendedName>
            <fullName>Integrase</fullName>
            <shortName>IN</shortName>
            <ecNumber evidence="3">2.7.7.-</ecNumber>
            <ecNumber evidence="3">3.1.-.-</ecNumber>
        </recommendedName>
    </component>
</protein>
<feature type="initiator methionine" description="Removed" evidence="5">
    <location>
        <position position="1"/>
    </location>
</feature>
<feature type="chain" id="PRO_0000259722" description="Gag-Pol polyprotein">
    <location>
        <begin position="2"/>
        <end position="1734"/>
    </location>
</feature>
<feature type="chain" id="PRO_0000442887" description="Matrix protein p15">
    <location>
        <begin position="2"/>
        <end position="129"/>
    </location>
</feature>
<feature type="chain" id="PRO_0000442888" description="RNA-binding phosphoprotein p12">
    <location>
        <begin position="130"/>
        <end position="214"/>
    </location>
</feature>
<feature type="chain" id="PRO_0000442889" description="Capsid protein p30">
    <location>
        <begin position="215"/>
        <end position="477"/>
    </location>
</feature>
<feature type="chain" id="PRO_0000442890" description="Nucleocapsid protein p10-Pol">
    <location>
        <begin position="478"/>
        <end position="533"/>
    </location>
</feature>
<feature type="chain" id="PRO_0000026129" description="Protease">
    <location>
        <begin position="534"/>
        <end position="658"/>
    </location>
</feature>
<feature type="chain" id="PRO_0000259723" description="Reverse transcriptase/ribonuclease H">
    <location>
        <begin position="659"/>
        <end position="1329"/>
    </location>
</feature>
<feature type="chain" id="PRO_0000259724" description="Integrase">
    <location>
        <begin position="1330"/>
        <end position="1734"/>
    </location>
</feature>
<feature type="domain" description="Peptidase A2" evidence="7">
    <location>
        <begin position="560"/>
        <end position="630"/>
    </location>
</feature>
<feature type="domain" description="Reverse transcriptase" evidence="8">
    <location>
        <begin position="740"/>
        <end position="931"/>
    </location>
</feature>
<feature type="domain" description="RNase H type-1" evidence="9">
    <location>
        <begin position="1173"/>
        <end position="1319"/>
    </location>
</feature>
<feature type="domain" description="Integrase catalytic" evidence="10">
    <location>
        <begin position="1443"/>
        <end position="1601"/>
    </location>
</feature>
<feature type="zinc finger region" description="CCHC-type" evidence="6">
    <location>
        <begin position="501"/>
        <end position="518"/>
    </location>
</feature>
<feature type="zinc finger region" description="HHCC-type" evidence="3">
    <location>
        <begin position="1386"/>
        <end position="1426"/>
    </location>
</feature>
<feature type="region of interest" description="Disordered" evidence="11">
    <location>
        <begin position="107"/>
        <end position="217"/>
    </location>
</feature>
<feature type="region of interest" description="Interaction with host PIAS4" evidence="1">
    <location>
        <begin position="344"/>
        <end position="392"/>
    </location>
</feature>
<feature type="region of interest" description="Interaction with host UBE2I" evidence="1">
    <location>
        <begin position="429"/>
        <end position="434"/>
    </location>
</feature>
<feature type="region of interest" description="Disordered" evidence="11">
    <location>
        <begin position="434"/>
        <end position="498"/>
    </location>
</feature>
<feature type="region of interest" description="Disordered" evidence="11">
    <location>
        <begin position="512"/>
        <end position="552"/>
    </location>
</feature>
<feature type="coiled-coil region" evidence="5">
    <location>
        <begin position="437"/>
        <end position="478"/>
    </location>
</feature>
<feature type="short sequence motif" description="PTAP/PSAP motif" evidence="1">
    <location>
        <begin position="109"/>
        <end position="112"/>
    </location>
</feature>
<feature type="short sequence motif" description="LYPX(n)L motif" evidence="1">
    <location>
        <begin position="128"/>
        <end position="132"/>
    </location>
</feature>
<feature type="short sequence motif" description="PPXY motif" evidence="1">
    <location>
        <begin position="161"/>
        <end position="164"/>
    </location>
</feature>
<feature type="compositionally biased region" description="Basic and acidic residues" evidence="11">
    <location>
        <begin position="434"/>
        <end position="465"/>
    </location>
</feature>
<feature type="compositionally biased region" description="Basic and acidic residues" evidence="11">
    <location>
        <begin position="485"/>
        <end position="498"/>
    </location>
</feature>
<feature type="active site" description="Protease; shared with dimeric partner" evidence="7">
    <location>
        <position position="565"/>
    </location>
</feature>
<feature type="binding site" evidence="8">
    <location>
        <position position="808"/>
    </location>
    <ligand>
        <name>Mg(2+)</name>
        <dbReference type="ChEBI" id="CHEBI:18420"/>
        <label>1</label>
        <note>catalytic; for reverse transcriptase activity</note>
    </ligand>
</feature>
<feature type="binding site" evidence="8">
    <location>
        <position position="882"/>
    </location>
    <ligand>
        <name>Mg(2+)</name>
        <dbReference type="ChEBI" id="CHEBI:18420"/>
        <label>1</label>
        <note>catalytic; for reverse transcriptase activity</note>
    </ligand>
</feature>
<feature type="binding site" evidence="8">
    <location>
        <position position="883"/>
    </location>
    <ligand>
        <name>Mg(2+)</name>
        <dbReference type="ChEBI" id="CHEBI:18420"/>
        <label>1</label>
        <note>catalytic; for reverse transcriptase activity</note>
    </ligand>
</feature>
<feature type="binding site" evidence="9">
    <location>
        <position position="1182"/>
    </location>
    <ligand>
        <name>Mg(2+)</name>
        <dbReference type="ChEBI" id="CHEBI:18420"/>
        <label>2</label>
        <note>catalytic; for RNase H activity</note>
    </ligand>
</feature>
<feature type="binding site" evidence="9">
    <location>
        <position position="1220"/>
    </location>
    <ligand>
        <name>Mg(2+)</name>
        <dbReference type="ChEBI" id="CHEBI:18420"/>
        <label>2</label>
        <note>catalytic; for RNase H activity</note>
    </ligand>
</feature>
<feature type="binding site" evidence="9">
    <location>
        <position position="1241"/>
    </location>
    <ligand>
        <name>Mg(2+)</name>
        <dbReference type="ChEBI" id="CHEBI:18420"/>
        <label>2</label>
        <note>catalytic; for RNase H activity</note>
    </ligand>
</feature>
<feature type="binding site" evidence="9">
    <location>
        <position position="1311"/>
    </location>
    <ligand>
        <name>Mg(2+)</name>
        <dbReference type="ChEBI" id="CHEBI:18420"/>
        <label>2</label>
        <note>catalytic; for RNase H activity</note>
    </ligand>
</feature>
<feature type="binding site" evidence="10">
    <location>
        <position position="1454"/>
    </location>
    <ligand>
        <name>Mg(2+)</name>
        <dbReference type="ChEBI" id="CHEBI:18420"/>
        <label>3</label>
        <note>catalytic; for integrase activity</note>
    </ligand>
</feature>
<feature type="binding site" evidence="10">
    <location>
        <position position="1513"/>
    </location>
    <ligand>
        <name>Mg(2+)</name>
        <dbReference type="ChEBI" id="CHEBI:18420"/>
        <label>3</label>
        <note>catalytic; for integrase activity</note>
    </ligand>
</feature>
<feature type="site" description="Cleavage; by viral protease" evidence="3">
    <location>
        <begin position="129"/>
        <end position="130"/>
    </location>
</feature>
<feature type="site" description="Cleavage; by viral protease" evidence="3">
    <location>
        <begin position="214"/>
        <end position="215"/>
    </location>
</feature>
<feature type="site" description="Cleavage; by viral protease" evidence="3">
    <location>
        <begin position="477"/>
        <end position="478"/>
    </location>
</feature>
<feature type="site" description="Cleavage; by viral protease" evidence="3">
    <location>
        <begin position="533"/>
        <end position="534"/>
    </location>
</feature>
<feature type="site" description="Cleavage; by viral protease" evidence="3">
    <location>
        <begin position="658"/>
        <end position="659"/>
    </location>
</feature>
<feature type="site" description="Cleavage; by viral protease" evidence="3">
    <location>
        <begin position="1329"/>
        <end position="1330"/>
    </location>
</feature>
<feature type="modified residue" description="Phosphoserine; by host" evidence="3">
    <location>
        <position position="191"/>
    </location>
</feature>
<feature type="lipid moiety-binding region" description="N-myristoyl glycine; by host" evidence="5">
    <location>
        <position position="2"/>
    </location>
</feature>
<feature type="sequence conflict" description="In Ref. 2." evidence="12" ref="2">
    <original>R</original>
    <variation>T</variation>
    <location>
        <position position="1078"/>
    </location>
</feature>
<feature type="sequence conflict" description="In Ref. 2." evidence="12" ref="2">
    <location>
        <position position="1534"/>
    </location>
</feature>
<accession>P03356</accession>
<accession>P03357</accession>
<sequence>MGQTVTTPLSLTLEHWEDVQRIASNQSVDVKKRRWVTFCSAEWPTFGVGWPQDGTFNLDIILQVKSKVFSPGPHGHPDQVPYIVTWEAIAYEPPPWVKPFVSPKLSPSPTAPILPSGPSTQPPPRSALYPALTPSIKPRPSKPQVLSDNGGPLIDLLSEDPPPYGGQGLSSSDGDGDREEATSTSEIPAPSPIVSRLRGKRDPPAADSTTSRAFPLRLGGNGQLQYWPFSSSDLYNWKNNNPSFSEDPGKLTALIESVLTTHQPTWDDCQQLLGTLLTGEEKQRVLLEARKAVRGNDGRPTQLPNEVDAAFPLERPDWDYTTQRGRNHLVLYRQLLLAGLQNAGRSPTNLAKVKGITQGPNESPSAFLERLKEAYRRYTPYDPEDPGQETNVSMSFIWQSAPDIGRKLERLEDLKSKTLGDLVREAERIFNKRETPEEREERVRRETEEKEERRRAEEEQKEKERDRRRHREMSKLLATVVSGQRQDRQGGERRRPQLDKDQCAYCKEKGHWAKDCPKKPRGPRGPRPQTSLLTLDDQGGQGQEPPPEPRITLTVGGQPVTFLVDTGAQHSVLTQNPGPLSDRSAWVQGATGGKRYRWTTDRKVHLATGKVTHSFLHVPDCPYPLLGRDLLTKLKAQIHFEGSGAQVVGPKGQPLQVLTLNLEDEYRLYETSAEPEVSPGSTWLSDFPQAWAETGGMGLAVRQAPLIIPLKATSTPVSIKQYPMSQEAKLGIKPHIQRLLDQGILVPCQSPWNTPLLPVKKPGTNDYRPVQDLREVNKRVEDIHPTVPNPYNLLSGLPPSHRWYTVLDLKDAFFCLRLHPTSQPLFAFEWRDPGMGISGQLTWTRLPQGFKNSPTLFDEALHRDLADFRIQHPDLILLQYVDDILLAATSELDCQQGTRALLLTLGNLGYRASAKKAQLCQKQVKYLGYLLKEGQRWLTEARKETVMGQPTPKTPRQLREFLGTAGFCRLWIPGFAEMAAPLYPLTKTGTLFNWGPDQQKAYQEIKQALLTAPALGLPDLTKPFELFVDEKQGYAKGVLTQKLGPWRRPVAYLSKKLDPVAAGWPPCLRMVAAIAVLRKDAGKLTMGQPLVILAPHAVEALVKQPPDRWLSNARMTHYQAMLLDTDRVQFGPVVALNPATLLPLPEEGAPHDCLEILAETHGTRPDLTDQPIPDADHTWYTDGSSFLQEGQRKAGAAVTTETEVIWARALPAGTSAQRAELIALTQALKMAEGKRLNVYTDSRYAFATAHIHGEIYRRRGLLTSEGREIKNKSEILALLKALFLPKRLSIIHCLGHQKGDSAEARGNRLADQAAREAAIKTPPDTSTLLIEDSTPYTPAYFHYTETDLKKLRELGATYNQSKGYWVFQGKPVMPDQFVFELLDSLHRLTHLGYQKMKALLDRGESPYYMLNRDKTLQYVADSCTVCAQVNASKAKIGAGVRVRGHRPGSHWEIDFTEVKPGLYGYKYLLVFVDTFSGWVEAFPTKRETARVVSKKLLEEIFPRFGMPQVLGSDNGPAFTSQVSQSVADLLGIDWKLHCAYRPQSSGQVERMNRTIKETLTKLTLAAGTRDWVLLLPLALYRARNTPGPHGLTPYEILYGAPPPLVNFHDPDMSELTNSPSLQAHLQALQTVQREIWKPLAEAYRDQLDQPVIPHPFRIGDSVWVRRHQTKNLEPRWKGPYTVLLTTPTALKVDGISAWIHAAHVKAATTPPIKPSWRVQRSQNPLKIRLTRGAP</sequence>
<proteinExistence type="inferred from homology"/>
<evidence type="ECO:0000250" key="1">
    <source>
        <dbReference type="UniProtKB" id="P03332"/>
    </source>
</evidence>
<evidence type="ECO:0000250" key="2">
    <source>
        <dbReference type="UniProtKB" id="P03336"/>
    </source>
</evidence>
<evidence type="ECO:0000250" key="3">
    <source>
        <dbReference type="UniProtKB" id="P03355"/>
    </source>
</evidence>
<evidence type="ECO:0000250" key="4">
    <source>
        <dbReference type="UniProtKB" id="P26807"/>
    </source>
</evidence>
<evidence type="ECO:0000255" key="5"/>
<evidence type="ECO:0000255" key="6">
    <source>
        <dbReference type="PROSITE-ProRule" id="PRU00047"/>
    </source>
</evidence>
<evidence type="ECO:0000255" key="7">
    <source>
        <dbReference type="PROSITE-ProRule" id="PRU00275"/>
    </source>
</evidence>
<evidence type="ECO:0000255" key="8">
    <source>
        <dbReference type="PROSITE-ProRule" id="PRU00405"/>
    </source>
</evidence>
<evidence type="ECO:0000255" key="9">
    <source>
        <dbReference type="PROSITE-ProRule" id="PRU00408"/>
    </source>
</evidence>
<evidence type="ECO:0000255" key="10">
    <source>
        <dbReference type="PROSITE-ProRule" id="PRU00457"/>
    </source>
</evidence>
<evidence type="ECO:0000256" key="11">
    <source>
        <dbReference type="SAM" id="MobiDB-lite"/>
    </source>
</evidence>
<evidence type="ECO:0000305" key="12"/>
<comment type="function">
    <molecule>Gag-Pol polyprotein</molecule>
    <text evidence="1">Plays a role in budding and is processed by the viral protease during virion maturation outside the cell. During budding, it recruits, in a PPXY-dependent or independent manner, Nedd4-like ubiquitin ligases that conjugate ubiquitin molecules to Gag-Pol, or to Gag-Pol binding host factors. Interaction with HECT ubiquitin ligases probably link the viral protein to the host ESCRT pathway and facilitates release.</text>
</comment>
<comment type="function">
    <molecule>Matrix protein p15</molecule>
    <text evidence="1">Targets Gag and gag-pol polyproteins to the plasma membrane via a multipartite membrane binding signal, that includes its myristoylated N-terminus. Also mediates nuclear localization of the pre-integration complex.</text>
</comment>
<comment type="function">
    <molecule>RNA-binding phosphoprotein p12</molecule>
    <text evidence="3">Constituent of the pre-integration complex (PIC) which tethers the latter to mitotic chromosomes. This allows the integration of the viral genome into the host DNA.</text>
</comment>
<comment type="function">
    <molecule>Capsid protein p30</molecule>
    <text evidence="2">Forms the spherical core of the virion that encapsulates the genomic RNA-nucleocapsid complex.</text>
</comment>
<comment type="function">
    <molecule>Nucleocapsid protein p10-Pol</molecule>
    <text evidence="1 3">Involved in the packaging and encapsidation of two copies of the genome. Binds with high affinity to conserved UCUG elements within the packaging signal, located near the 5'-end of the genome. This binding is dependent on genome dimerization. Acts as a nucleic acid chaperone which is involved in rearrangement of nucleic acid secondary structures during gRNA retrotranscription (By similarity).</text>
</comment>
<comment type="function">
    <molecule>Protease</molecule>
    <text evidence="1 7">The aspartyl protease mediates proteolytic cleavages of Gag and Gag-Pol polyproteins during or shortly after the release of the virion from the plasma membrane. Cleavages take place as an ordered, step-wise cascade to yield mature proteins. This process is called maturation. Displays maximal activity during the budding process just prior to particle release from the cell (Potential). Cleaves the translation initiation factor eIF4G leading to the inhibition of host cap-dependent translation (By similarity).</text>
</comment>
<comment type="function">
    <molecule>Reverse transcriptase/ribonuclease H</molecule>
    <text evidence="5">RT is a multifunctional enzyme that converts the viral dimeric RNA genome into dsDNA in the cytoplasm, shortly after virus entry into the cell. This enzyme displays a DNA polymerase activity that can copy either DNA or RNA templates, and a ribonuclease H (RNase H) activity that cleaves the RNA strand of RNA-DNA heteroduplexes in a partially processive 3' to 5' endonucleasic mode. Conversion of viral genomic RNA into dsDNA requires many steps. A tRNA binds to the primer-binding site (PBS) situated at the 5' end of the viral RNA. RT uses the 3' end of the tRNA primer to perform a short round of RNA-dependent minus-strand DNA synthesis. The reading proceeds through the U5 region and ends after the repeated (R) region which is present at both ends of viral RNA. The portion of the RNA-DNA heteroduplex is digested by the RNase H, resulting in a ssDNA product attached to the tRNA primer. This ssDNA/tRNA hybridizes with the identical R region situated at the 3' end of viral RNA. This template exchange, known as minus-strand DNA strong stop transfer, can be either intra- or intermolecular. RT uses the 3' end of this newly synthesized short ssDNA to perform the RNA-dependent minus-strand DNA synthesis of the whole template. RNase H digests the RNA template except for a polypurine tract (PPT) situated at the 5' end of the genome. It is not clear if both polymerase and RNase H activities are simultaneous. RNase H probably can proceed both in a polymerase-dependent (RNA cut into small fragments by the same RT performing DNA synthesis) and a polymerase-independent mode (cleavage of remaining RNA fragments by free RTs). Secondly, RT performs DNA-directed plus-strand DNA synthesis using the PPT that has not been removed by RNase H as primers. PPT and tRNA primers are then removed by RNase H. The 3' and 5' ssDNA PBS regions hybridize to form a circular dsDNA intermediate. Strand displacement synthesis by RT to the PBS and PPT ends produces a blunt ended, linear dsDNA copy of the viral genome that includes long terminal repeats (LTRs) at both ends.</text>
</comment>
<comment type="function">
    <molecule>Integrase</molecule>
    <text evidence="3">Catalyzes viral DNA integration into the host chromosome, by performing a series of DNA cutting and joining reactions. This enzyme activity takes place after virion entry into a cell and reverse transcription of the RNA genome in dsDNA. The first step in the integration process is 3' processing. This step requires a complex comprising the viral genome, matrix protein and integrase. This complex is called the pre-integration complex (PIC). The integrase protein removes 2 nucleotides from each 3' end of the viral DNA, leaving recessed CA OH's at the 3' ends. In the second step that requires cell division, the PIC enters cell nucleus. In the third step, termed strand transfer, the integrase protein joins the previously processed 3' ends to the 5' ends of strands of target cellular DNA at the site of integration. The last step is viral DNA integration into host chromosome.</text>
</comment>
<comment type="catalytic activity">
    <reaction evidence="8">
        <text>DNA(n) + a 2'-deoxyribonucleoside 5'-triphosphate = DNA(n+1) + diphosphate</text>
        <dbReference type="Rhea" id="RHEA:22508"/>
        <dbReference type="Rhea" id="RHEA-COMP:17339"/>
        <dbReference type="Rhea" id="RHEA-COMP:17340"/>
        <dbReference type="ChEBI" id="CHEBI:33019"/>
        <dbReference type="ChEBI" id="CHEBI:61560"/>
        <dbReference type="ChEBI" id="CHEBI:173112"/>
        <dbReference type="EC" id="2.7.7.49"/>
    </reaction>
</comment>
<comment type="catalytic activity">
    <reaction evidence="8">
        <text>DNA(n) + a 2'-deoxyribonucleoside 5'-triphosphate = DNA(n+1) + diphosphate</text>
        <dbReference type="Rhea" id="RHEA:22508"/>
        <dbReference type="Rhea" id="RHEA-COMP:17339"/>
        <dbReference type="Rhea" id="RHEA-COMP:17340"/>
        <dbReference type="ChEBI" id="CHEBI:33019"/>
        <dbReference type="ChEBI" id="CHEBI:61560"/>
        <dbReference type="ChEBI" id="CHEBI:173112"/>
        <dbReference type="EC" id="2.7.7.7"/>
    </reaction>
</comment>
<comment type="catalytic activity">
    <reaction evidence="9">
        <text>Endonucleolytic cleavage to 5'-phosphomonoester.</text>
        <dbReference type="EC" id="3.1.26.4"/>
    </reaction>
</comment>
<comment type="cofactor">
    <cofactor evidence="8">
        <name>Mg(2+)</name>
        <dbReference type="ChEBI" id="CHEBI:18420"/>
    </cofactor>
    <text evidence="8">The RT polymerase active site binds 2 magnesium ions.</text>
</comment>
<comment type="cofactor">
    <cofactor evidence="3">
        <name>Mg(2+)</name>
        <dbReference type="ChEBI" id="CHEBI:18420"/>
    </cofactor>
    <text evidence="3">Binds 1 magnesium ion for ribonuclease H (RNase H) activity.</text>
</comment>
<comment type="cofactor">
    <cofactor evidence="3">
        <name>Mg(2+)</name>
        <dbReference type="ChEBI" id="CHEBI:18420"/>
    </cofactor>
    <text evidence="3">Magnesium ions are required for integrase activity. Binds at least 1, maybe 2 magnesium ions.</text>
</comment>
<comment type="activity regulation">
    <molecule>Protease</molecule>
    <text evidence="3">Most efficiently inhibited by Amprenavir, which is able to block Gag-Pol processing in infected cells.</text>
</comment>
<comment type="subunit">
    <molecule>Capsid protein p30</molecule>
    <text evidence="3">Homohexamer; further associates as homomultimer (By similarity). The virus core is composed of a lattice formed from hexagonal rings, each containing six capsid monomers (By similarity).</text>
</comment>
<comment type="subunit">
    <molecule>Gag-Pol polyprotein</molecule>
    <text evidence="3">Interacts (via PPXY motif) with host NEDD4 (By similarity). Interacts (via PSAP motif) with host TSG101 (By similarity). Interacts (via LYPX(n)L motif) with host PDCD6IP (By similarity).</text>
</comment>
<comment type="subunit">
    <molecule>Reverse transcriptase/ribonuclease H</molecule>
    <text evidence="3 12">The reverse transcriptase is a monomer (Potential). Interacts (via RNase domains) with host release factor ETF1; this interaction is essential for translational readthrough of amber codon between viral gag and pol genes, as well as for viral replication (By similarity).</text>
</comment>
<comment type="subunit">
    <molecule>Integrase</molecule>
    <text evidence="3">Homodimer (By similarity).</text>
</comment>
<comment type="subcellular location">
    <molecule>Gag-Pol polyprotein</molecule>
    <subcellularLocation>
        <location evidence="1">Virion</location>
    </subcellularLocation>
    <subcellularLocation>
        <location evidence="1">Host cell membrane</location>
        <topology evidence="1">Lipid-anchor</topology>
    </subcellularLocation>
    <subcellularLocation>
        <location evidence="1">Host late endosome membrane</location>
        <topology evidence="1">Lipid-anchor</topology>
    </subcellularLocation>
    <subcellularLocation>
        <location evidence="4">Host endosome</location>
        <location evidence="4">Host multivesicular body</location>
    </subcellularLocation>
    <text evidence="3">These locations are probably linked to virus assembly sites.</text>
</comment>
<comment type="subcellular location">
    <molecule>Matrix protein p15</molecule>
    <subcellularLocation>
        <location evidence="3">Virion</location>
    </subcellularLocation>
</comment>
<comment type="subcellular location">
    <molecule>Capsid protein p30</molecule>
    <subcellularLocation>
        <location evidence="3">Virion</location>
    </subcellularLocation>
</comment>
<comment type="subcellular location">
    <molecule>Nucleocapsid protein p10-Pol</molecule>
    <subcellularLocation>
        <location evidence="3">Virion</location>
    </subcellularLocation>
</comment>
<comment type="subcellular location">
    <molecule>Protease</molecule>
    <subcellularLocation>
        <location evidence="3">Virion</location>
    </subcellularLocation>
</comment>
<comment type="subcellular location">
    <molecule>RNA-binding phosphoprotein p12</molecule>
    <subcellularLocation>
        <location evidence="3">Host cytoplasm</location>
    </subcellularLocation>
    <text evidence="3">Localizes to the host cytoplasm early in infection and binds to the mitotic chromosomes later on.</text>
</comment>
<comment type="domain">
    <molecule>Gag-Pol polyprotein</molecule>
    <text evidence="1">Late-budding domains (L domains) are short sequence motifs essential for viral particle release. They can occur individually or in close proximity within structural proteins. They interacts with sorting cellular proteins of the multivesicular body (MVB) pathway. Most of these proteins are class E vacuolar protein sorting factors belonging to ESCRT-I, ESCRT-II or ESCRT-III complexes. RNA-binding phosphoprotein p12 contains one L domain: a PPXY motif which potentially interacts with the WW domain 3 of NEDD4 E3 ubiquitin ligase. PPXY motif is essential for virus egress. Matrix protein p15 contains one L domain: a PTAP/PSAP motif, which potentially interacts with the UEV domain of TSG101. The junction between the matrix protein p15 and RNA-binding phosphoprotein p12 also contains one L domain: a LYPX(n)L motif which potentially interacts with PDCD6IP. Both PSAP and LYPX(n)L domains might play little to no role in budding and possibly drive residual virus release. contains.</text>
</comment>
<comment type="PTM">
    <molecule>Gag-Pol polyprotein</molecule>
    <text evidence="1">Ubiquitinated by ITCH. Gag can recruit the ubiquitin ligase Itch in an L domain-independent manner to facilitate virus release via a mechanism that involves Gag ubiquitination.</text>
</comment>
<comment type="PTM">
    <molecule>Gag-Pol polyprotein</molecule>
    <text evidence="3">Specific enzymatic cleavages by the viral protease yield mature proteins. The protease is released by autocatalytic cleavage. The polyprotein is cleaved during and after budding, this process is termed maturation.</text>
</comment>
<comment type="PTM">
    <molecule>Capsid protein p30</molecule>
    <text evidence="3">Sumoylated; which is required for virus replication.</text>
</comment>
<comment type="PTM">
    <molecule>RNA-binding phosphoprotein p12</molecule>
    <text evidence="3">Phosphorylated on serine residues.</text>
</comment>
<comment type="miscellaneous">
    <molecule>Gag-Pol polyprotein</molecule>
    <text evidence="3">This protein is translated as a gag-pol fusion protein by episodic readthrough of the gag protein termination codon. Readthrough of the terminator codon TAG occurs between the codons for 537-Asp and 539-Gly.</text>
</comment>
<comment type="miscellaneous">
    <molecule>Nucleocapsid protein p10-Pol</molecule>
    <text evidence="3">Nucleocapsid protein p10-Pol released from Pol polyprotein (NC-pol) is a few amino acids shorter than the nucleocapsid protein p10 released from Gag polyprotein (NC-gag).</text>
</comment>
<comment type="miscellaneous">
    <molecule>Reverse transcriptase/ribonuclease H</molecule>
    <text evidence="8">The reverse transcriptase is an error-prone enzyme that lacks a proof-reading function. High mutations rate is a direct consequence of this characteristic. RT also displays frequent template switching leading to high recombination rate. Recombination mostly occurs between homologous regions of the two copackaged RNA genomes. If these two RNA molecules derive from different viral strains, reverse transcription will give rise to highly recombinated proviral DNAs.</text>
</comment>
<comment type="similarity">
    <text evidence="12">Belongs to the retroviral Pol polyprotein family.</text>
</comment>
<keyword id="KW-0064">Aspartyl protease</keyword>
<keyword id="KW-0167">Capsid protein</keyword>
<keyword id="KW-0175">Coiled coil</keyword>
<keyword id="KW-0229">DNA integration</keyword>
<keyword id="KW-0233">DNA recombination</keyword>
<keyword id="KW-0238">DNA-binding</keyword>
<keyword id="KW-0239">DNA-directed DNA polymerase</keyword>
<keyword id="KW-0255">Endonuclease</keyword>
<keyword id="KW-1262">Eukaryotic host gene expression shutoff by virus</keyword>
<keyword id="KW-1193">Eukaryotic host translation shutoff by virus</keyword>
<keyword id="KW-1032">Host cell membrane</keyword>
<keyword id="KW-1035">Host cytoplasm</keyword>
<keyword id="KW-1039">Host endosome</keyword>
<keyword id="KW-1190">Host gene expression shutoff by virus</keyword>
<keyword id="KW-1043">Host membrane</keyword>
<keyword id="KW-0945">Host-virus interaction</keyword>
<keyword id="KW-0378">Hydrolase</keyword>
<keyword id="KW-0449">Lipoprotein</keyword>
<keyword id="KW-0460">Magnesium</keyword>
<keyword id="KW-0472">Membrane</keyword>
<keyword id="KW-0479">Metal-binding</keyword>
<keyword id="KW-0511">Multifunctional enzyme</keyword>
<keyword id="KW-0519">Myristate</keyword>
<keyword id="KW-0540">Nuclease</keyword>
<keyword id="KW-0548">Nucleotidyltransferase</keyword>
<keyword id="KW-0597">Phosphoprotein</keyword>
<keyword id="KW-0645">Protease</keyword>
<keyword id="KW-1159">RNA suppression of termination</keyword>
<keyword id="KW-0694">RNA-binding</keyword>
<keyword id="KW-0695">RNA-directed DNA polymerase</keyword>
<keyword id="KW-0808">Transferase</keyword>
<keyword id="KW-0832">Ubl conjugation</keyword>
<keyword id="KW-1179">Viral genome integration</keyword>
<keyword id="KW-0468">Viral matrix protein</keyword>
<keyword id="KW-0543">Viral nucleoprotein</keyword>
<keyword id="KW-0946">Virion</keyword>
<keyword id="KW-1160">Virus entry into host cell</keyword>
<keyword id="KW-0862">Zinc</keyword>
<keyword id="KW-0863">Zinc-finger</keyword>
<gene>
    <name type="primary">pol</name>
</gene>
<name>POL_MLVAV</name>
<reference key="1">
    <citation type="journal article" date="1984" name="J. Virol.">
        <title>Nucleotide sequence of AKV murine leukemia virus.</title>
        <authorList>
            <person name="Herr W."/>
        </authorList>
    </citation>
    <scope>NUCLEOTIDE SEQUENCE [GENOMIC RNA]</scope>
</reference>
<reference key="2">
    <citation type="journal article" date="1982" name="Nucleic Acids Res.">
        <title>Nucleotide sequence of the 3' half of AKV.</title>
        <authorList>
            <person name="Herr W."/>
            <person name="Corbin V."/>
            <person name="Gilbert W."/>
        </authorList>
    </citation>
    <scope>NUCLEOTIDE SEQUENCE [GENOMIC RNA] OF 891-1734</scope>
</reference>
<dbReference type="EC" id="3.4.23.-" evidence="7"/>
<dbReference type="EC" id="2.7.7.49" evidence="8"/>
<dbReference type="EC" id="2.7.7.7" evidence="8"/>
<dbReference type="EC" id="3.1.26.4" evidence="9"/>
<dbReference type="EC" id="2.7.7.-" evidence="3"/>
<dbReference type="EC" id="3.1.-.-" evidence="3"/>
<dbReference type="EMBL" id="J01998">
    <property type="protein sequence ID" value="AAB03091.1"/>
    <property type="molecule type" value="Genomic_RNA"/>
</dbReference>
<dbReference type="PIR" id="A03958">
    <property type="entry name" value="GNVWK"/>
</dbReference>
<dbReference type="SMR" id="P03356"/>
<dbReference type="Proteomes" id="UP000008875">
    <property type="component" value="Genome"/>
</dbReference>
<dbReference type="GO" id="GO:0044185">
    <property type="term" value="C:host cell late endosome membrane"/>
    <property type="evidence" value="ECO:0007669"/>
    <property type="project" value="UniProtKB-SubCell"/>
</dbReference>
<dbReference type="GO" id="GO:0020002">
    <property type="term" value="C:host cell plasma membrane"/>
    <property type="evidence" value="ECO:0007669"/>
    <property type="project" value="UniProtKB-SubCell"/>
</dbReference>
<dbReference type="GO" id="GO:0072494">
    <property type="term" value="C:host multivesicular body"/>
    <property type="evidence" value="ECO:0007669"/>
    <property type="project" value="UniProtKB-SubCell"/>
</dbReference>
<dbReference type="GO" id="GO:0016020">
    <property type="term" value="C:membrane"/>
    <property type="evidence" value="ECO:0007669"/>
    <property type="project" value="UniProtKB-KW"/>
</dbReference>
<dbReference type="GO" id="GO:0019013">
    <property type="term" value="C:viral nucleocapsid"/>
    <property type="evidence" value="ECO:0007669"/>
    <property type="project" value="UniProtKB-KW"/>
</dbReference>
<dbReference type="GO" id="GO:0004190">
    <property type="term" value="F:aspartic-type endopeptidase activity"/>
    <property type="evidence" value="ECO:0007669"/>
    <property type="project" value="UniProtKB-KW"/>
</dbReference>
<dbReference type="GO" id="GO:0003677">
    <property type="term" value="F:DNA binding"/>
    <property type="evidence" value="ECO:0007669"/>
    <property type="project" value="UniProtKB-KW"/>
</dbReference>
<dbReference type="GO" id="GO:0003887">
    <property type="term" value="F:DNA-directed DNA polymerase activity"/>
    <property type="evidence" value="ECO:0007669"/>
    <property type="project" value="UniProtKB-KW"/>
</dbReference>
<dbReference type="GO" id="GO:0003723">
    <property type="term" value="F:RNA binding"/>
    <property type="evidence" value="ECO:0007669"/>
    <property type="project" value="UniProtKB-KW"/>
</dbReference>
<dbReference type="GO" id="GO:0003964">
    <property type="term" value="F:RNA-directed DNA polymerase activity"/>
    <property type="evidence" value="ECO:0007669"/>
    <property type="project" value="UniProtKB-KW"/>
</dbReference>
<dbReference type="GO" id="GO:0004523">
    <property type="term" value="F:RNA-DNA hybrid ribonuclease activity"/>
    <property type="evidence" value="ECO:0007669"/>
    <property type="project" value="UniProtKB-EC"/>
</dbReference>
<dbReference type="GO" id="GO:0039660">
    <property type="term" value="F:structural constituent of virion"/>
    <property type="evidence" value="ECO:0007669"/>
    <property type="project" value="UniProtKB-KW"/>
</dbReference>
<dbReference type="GO" id="GO:0008270">
    <property type="term" value="F:zinc ion binding"/>
    <property type="evidence" value="ECO:0007669"/>
    <property type="project" value="UniProtKB-KW"/>
</dbReference>
<dbReference type="GO" id="GO:0015074">
    <property type="term" value="P:DNA integration"/>
    <property type="evidence" value="ECO:0007669"/>
    <property type="project" value="UniProtKB-KW"/>
</dbReference>
<dbReference type="GO" id="GO:0006310">
    <property type="term" value="P:DNA recombination"/>
    <property type="evidence" value="ECO:0007669"/>
    <property type="project" value="UniProtKB-KW"/>
</dbReference>
<dbReference type="GO" id="GO:0075713">
    <property type="term" value="P:establishment of integrated proviral latency"/>
    <property type="evidence" value="ECO:0007669"/>
    <property type="project" value="UniProtKB-KW"/>
</dbReference>
<dbReference type="GO" id="GO:0006508">
    <property type="term" value="P:proteolysis"/>
    <property type="evidence" value="ECO:0007669"/>
    <property type="project" value="UniProtKB-KW"/>
</dbReference>
<dbReference type="GO" id="GO:0046718">
    <property type="term" value="P:symbiont entry into host cell"/>
    <property type="evidence" value="ECO:0007669"/>
    <property type="project" value="UniProtKB-KW"/>
</dbReference>
<dbReference type="GO" id="GO:0039657">
    <property type="term" value="P:symbiont-mediated suppression of host gene expression"/>
    <property type="evidence" value="ECO:0007669"/>
    <property type="project" value="UniProtKB-KW"/>
</dbReference>
<dbReference type="GO" id="GO:0044826">
    <property type="term" value="P:viral genome integration into host DNA"/>
    <property type="evidence" value="ECO:0007669"/>
    <property type="project" value="UniProtKB-KW"/>
</dbReference>
<dbReference type="GO" id="GO:0019068">
    <property type="term" value="P:virion assembly"/>
    <property type="evidence" value="ECO:0007669"/>
    <property type="project" value="InterPro"/>
</dbReference>
<dbReference type="CDD" id="cd09273">
    <property type="entry name" value="RNase_HI_RT_Bel"/>
    <property type="match status" value="1"/>
</dbReference>
<dbReference type="CDD" id="cd06095">
    <property type="entry name" value="RP_RTVL_H_like"/>
    <property type="match status" value="1"/>
</dbReference>
<dbReference type="CDD" id="cd03715">
    <property type="entry name" value="RT_ZFREV_like"/>
    <property type="match status" value="1"/>
</dbReference>
<dbReference type="FunFam" id="1.10.375.10:FF:000008">
    <property type="entry name" value="Gag polyprotein"/>
    <property type="match status" value="1"/>
</dbReference>
<dbReference type="FunFam" id="3.30.420.10:FF:000094">
    <property type="entry name" value="Gag-Pol polyprotein"/>
    <property type="match status" value="1"/>
</dbReference>
<dbReference type="FunFam" id="3.30.420.10:FF:000102">
    <property type="entry name" value="Gag-Pol polyprotein"/>
    <property type="match status" value="1"/>
</dbReference>
<dbReference type="FunFam" id="3.30.70.270:FF:000020">
    <property type="entry name" value="Transposon Tf2-6 polyprotein-like Protein"/>
    <property type="match status" value="1"/>
</dbReference>
<dbReference type="Gene3D" id="1.10.340.70">
    <property type="match status" value="1"/>
</dbReference>
<dbReference type="Gene3D" id="2.30.30.850">
    <property type="match status" value="1"/>
</dbReference>
<dbReference type="Gene3D" id="3.10.20.370">
    <property type="match status" value="1"/>
</dbReference>
<dbReference type="Gene3D" id="3.30.70.270">
    <property type="match status" value="2"/>
</dbReference>
<dbReference type="Gene3D" id="2.40.70.10">
    <property type="entry name" value="Acid Proteases"/>
    <property type="match status" value="1"/>
</dbReference>
<dbReference type="Gene3D" id="1.10.150.180">
    <property type="entry name" value="Gamma-retroviral matrix domain"/>
    <property type="match status" value="1"/>
</dbReference>
<dbReference type="Gene3D" id="3.10.10.10">
    <property type="entry name" value="HIV Type 1 Reverse Transcriptase, subunit A, domain 1"/>
    <property type="match status" value="1"/>
</dbReference>
<dbReference type="Gene3D" id="1.10.375.10">
    <property type="entry name" value="Human Immunodeficiency Virus Type 1 Capsid Protein"/>
    <property type="match status" value="1"/>
</dbReference>
<dbReference type="Gene3D" id="3.30.420.10">
    <property type="entry name" value="Ribonuclease H-like superfamily/Ribonuclease H"/>
    <property type="match status" value="2"/>
</dbReference>
<dbReference type="Gene3D" id="4.10.60.10">
    <property type="entry name" value="Zinc finger, CCHC-type"/>
    <property type="match status" value="1"/>
</dbReference>
<dbReference type="InterPro" id="IPR001969">
    <property type="entry name" value="Aspartic_peptidase_AS"/>
</dbReference>
<dbReference type="InterPro" id="IPR043502">
    <property type="entry name" value="DNA/RNA_pol_sf"/>
</dbReference>
<dbReference type="InterPro" id="IPR000840">
    <property type="entry name" value="G_retro_matrix"/>
</dbReference>
<dbReference type="InterPro" id="IPR036946">
    <property type="entry name" value="G_retro_matrix_sf"/>
</dbReference>
<dbReference type="InterPro" id="IPR039464">
    <property type="entry name" value="Gag-pol_Znf-H3C2"/>
</dbReference>
<dbReference type="InterPro" id="IPR002079">
    <property type="entry name" value="Gag_p12"/>
</dbReference>
<dbReference type="InterPro" id="IPR003036">
    <property type="entry name" value="Gag_P30"/>
</dbReference>
<dbReference type="InterPro" id="IPR001584">
    <property type="entry name" value="Integrase_cat-core"/>
</dbReference>
<dbReference type="InterPro" id="IPR040643">
    <property type="entry name" value="MLVIN_C"/>
</dbReference>
<dbReference type="InterPro" id="IPR001995">
    <property type="entry name" value="Peptidase_A2_cat"/>
</dbReference>
<dbReference type="InterPro" id="IPR021109">
    <property type="entry name" value="Peptidase_aspartic_dom_sf"/>
</dbReference>
<dbReference type="InterPro" id="IPR018061">
    <property type="entry name" value="Retropepsins"/>
</dbReference>
<dbReference type="InterPro" id="IPR008919">
    <property type="entry name" value="Retrov_capsid_N"/>
</dbReference>
<dbReference type="InterPro" id="IPR050462">
    <property type="entry name" value="Retroviral_Gag-Pol_poly"/>
</dbReference>
<dbReference type="InterPro" id="IPR010999">
    <property type="entry name" value="Retrovr_matrix"/>
</dbReference>
<dbReference type="InterPro" id="IPR043128">
    <property type="entry name" value="Rev_trsase/Diguanyl_cyclase"/>
</dbReference>
<dbReference type="InterPro" id="IPR012337">
    <property type="entry name" value="RNaseH-like_sf"/>
</dbReference>
<dbReference type="InterPro" id="IPR002156">
    <property type="entry name" value="RNaseH_domain"/>
</dbReference>
<dbReference type="InterPro" id="IPR036397">
    <property type="entry name" value="RNaseH_sf"/>
</dbReference>
<dbReference type="InterPro" id="IPR000477">
    <property type="entry name" value="RT_dom"/>
</dbReference>
<dbReference type="InterPro" id="IPR041577">
    <property type="entry name" value="RT_RNaseH_2"/>
</dbReference>
<dbReference type="InterPro" id="IPR001878">
    <property type="entry name" value="Znf_CCHC"/>
</dbReference>
<dbReference type="InterPro" id="IPR036875">
    <property type="entry name" value="Znf_CCHC_sf"/>
</dbReference>
<dbReference type="PANTHER" id="PTHR33166">
    <property type="entry name" value="GAG_P30 DOMAIN-CONTAINING PROTEIN"/>
    <property type="match status" value="1"/>
</dbReference>
<dbReference type="Pfam" id="PF01140">
    <property type="entry name" value="Gag_MA"/>
    <property type="match status" value="1"/>
</dbReference>
<dbReference type="Pfam" id="PF01141">
    <property type="entry name" value="Gag_p12"/>
    <property type="match status" value="1"/>
</dbReference>
<dbReference type="Pfam" id="PF02093">
    <property type="entry name" value="Gag_p30"/>
    <property type="match status" value="1"/>
</dbReference>
<dbReference type="Pfam" id="PF18697">
    <property type="entry name" value="MLVIN_C"/>
    <property type="match status" value="1"/>
</dbReference>
<dbReference type="Pfam" id="PF00075">
    <property type="entry name" value="RNase_H"/>
    <property type="match status" value="1"/>
</dbReference>
<dbReference type="Pfam" id="PF17919">
    <property type="entry name" value="RT_RNaseH_2"/>
    <property type="match status" value="1"/>
</dbReference>
<dbReference type="Pfam" id="PF00665">
    <property type="entry name" value="rve"/>
    <property type="match status" value="1"/>
</dbReference>
<dbReference type="Pfam" id="PF00077">
    <property type="entry name" value="RVP"/>
    <property type="match status" value="1"/>
</dbReference>
<dbReference type="Pfam" id="PF00078">
    <property type="entry name" value="RVT_1"/>
    <property type="match status" value="1"/>
</dbReference>
<dbReference type="Pfam" id="PF00098">
    <property type="entry name" value="zf-CCHC"/>
    <property type="match status" value="1"/>
</dbReference>
<dbReference type="Pfam" id="PF16721">
    <property type="entry name" value="zf-H3C2"/>
    <property type="match status" value="1"/>
</dbReference>
<dbReference type="SMART" id="SM00343">
    <property type="entry name" value="ZnF_C2HC"/>
    <property type="match status" value="1"/>
</dbReference>
<dbReference type="SUPFAM" id="SSF50630">
    <property type="entry name" value="Acid proteases"/>
    <property type="match status" value="1"/>
</dbReference>
<dbReference type="SUPFAM" id="SSF56672">
    <property type="entry name" value="DNA/RNA polymerases"/>
    <property type="match status" value="1"/>
</dbReference>
<dbReference type="SUPFAM" id="SSF47836">
    <property type="entry name" value="Retroviral matrix proteins"/>
    <property type="match status" value="1"/>
</dbReference>
<dbReference type="SUPFAM" id="SSF47943">
    <property type="entry name" value="Retrovirus capsid protein, N-terminal core domain"/>
    <property type="match status" value="1"/>
</dbReference>
<dbReference type="SUPFAM" id="SSF57756">
    <property type="entry name" value="Retrovirus zinc finger-like domains"/>
    <property type="match status" value="1"/>
</dbReference>
<dbReference type="SUPFAM" id="SSF53098">
    <property type="entry name" value="Ribonuclease H-like"/>
    <property type="match status" value="2"/>
</dbReference>
<dbReference type="PROSITE" id="PS50175">
    <property type="entry name" value="ASP_PROT_RETROV"/>
    <property type="match status" value="1"/>
</dbReference>
<dbReference type="PROSITE" id="PS00141">
    <property type="entry name" value="ASP_PROTEASE"/>
    <property type="match status" value="1"/>
</dbReference>
<dbReference type="PROSITE" id="PS50994">
    <property type="entry name" value="INTEGRASE"/>
    <property type="match status" value="1"/>
</dbReference>
<dbReference type="PROSITE" id="PS50879">
    <property type="entry name" value="RNASE_H_1"/>
    <property type="match status" value="1"/>
</dbReference>
<dbReference type="PROSITE" id="PS50878">
    <property type="entry name" value="RT_POL"/>
    <property type="match status" value="1"/>
</dbReference>
<dbReference type="PROSITE" id="PS50158">
    <property type="entry name" value="ZF_CCHC"/>
    <property type="match status" value="1"/>
</dbReference>